<dbReference type="EMBL" id="CP001043">
    <property type="protein sequence ID" value="ACC71824.1"/>
    <property type="molecule type" value="Genomic_DNA"/>
</dbReference>
<dbReference type="RefSeq" id="WP_007747161.1">
    <property type="nucleotide sequence ID" value="NZ_CADFGH010000021.1"/>
</dbReference>
<dbReference type="SMR" id="B2JHD9"/>
<dbReference type="STRING" id="391038.Bphy_2652"/>
<dbReference type="GeneID" id="69968220"/>
<dbReference type="KEGG" id="bph:Bphy_2652"/>
<dbReference type="eggNOG" id="COG0261">
    <property type="taxonomic scope" value="Bacteria"/>
</dbReference>
<dbReference type="HOGENOM" id="CLU_061463_3_1_4"/>
<dbReference type="OrthoDB" id="9813334at2"/>
<dbReference type="Proteomes" id="UP000001192">
    <property type="component" value="Chromosome 1"/>
</dbReference>
<dbReference type="GO" id="GO:0005737">
    <property type="term" value="C:cytoplasm"/>
    <property type="evidence" value="ECO:0007669"/>
    <property type="project" value="UniProtKB-ARBA"/>
</dbReference>
<dbReference type="GO" id="GO:1990904">
    <property type="term" value="C:ribonucleoprotein complex"/>
    <property type="evidence" value="ECO:0007669"/>
    <property type="project" value="UniProtKB-KW"/>
</dbReference>
<dbReference type="GO" id="GO:0005840">
    <property type="term" value="C:ribosome"/>
    <property type="evidence" value="ECO:0007669"/>
    <property type="project" value="UniProtKB-KW"/>
</dbReference>
<dbReference type="GO" id="GO:0019843">
    <property type="term" value="F:rRNA binding"/>
    <property type="evidence" value="ECO:0007669"/>
    <property type="project" value="UniProtKB-UniRule"/>
</dbReference>
<dbReference type="GO" id="GO:0003735">
    <property type="term" value="F:structural constituent of ribosome"/>
    <property type="evidence" value="ECO:0007669"/>
    <property type="project" value="InterPro"/>
</dbReference>
<dbReference type="GO" id="GO:0006412">
    <property type="term" value="P:translation"/>
    <property type="evidence" value="ECO:0007669"/>
    <property type="project" value="UniProtKB-UniRule"/>
</dbReference>
<dbReference type="HAMAP" id="MF_01363">
    <property type="entry name" value="Ribosomal_bL21"/>
    <property type="match status" value="1"/>
</dbReference>
<dbReference type="InterPro" id="IPR028909">
    <property type="entry name" value="bL21-like"/>
</dbReference>
<dbReference type="InterPro" id="IPR036164">
    <property type="entry name" value="bL21-like_sf"/>
</dbReference>
<dbReference type="InterPro" id="IPR001787">
    <property type="entry name" value="Ribosomal_bL21"/>
</dbReference>
<dbReference type="InterPro" id="IPR018258">
    <property type="entry name" value="Ribosomal_bL21_CS"/>
</dbReference>
<dbReference type="NCBIfam" id="TIGR00061">
    <property type="entry name" value="L21"/>
    <property type="match status" value="1"/>
</dbReference>
<dbReference type="PANTHER" id="PTHR21349">
    <property type="entry name" value="50S RIBOSOMAL PROTEIN L21"/>
    <property type="match status" value="1"/>
</dbReference>
<dbReference type="PANTHER" id="PTHR21349:SF0">
    <property type="entry name" value="LARGE RIBOSOMAL SUBUNIT PROTEIN BL21M"/>
    <property type="match status" value="1"/>
</dbReference>
<dbReference type="Pfam" id="PF00829">
    <property type="entry name" value="Ribosomal_L21p"/>
    <property type="match status" value="1"/>
</dbReference>
<dbReference type="SUPFAM" id="SSF141091">
    <property type="entry name" value="L21p-like"/>
    <property type="match status" value="1"/>
</dbReference>
<dbReference type="PROSITE" id="PS01169">
    <property type="entry name" value="RIBOSOMAL_L21"/>
    <property type="match status" value="1"/>
</dbReference>
<keyword id="KW-1185">Reference proteome</keyword>
<keyword id="KW-0687">Ribonucleoprotein</keyword>
<keyword id="KW-0689">Ribosomal protein</keyword>
<keyword id="KW-0694">RNA-binding</keyword>
<keyword id="KW-0699">rRNA-binding</keyword>
<gene>
    <name evidence="1" type="primary">rplU</name>
    <name type="ordered locus">Bphy_2652</name>
</gene>
<accession>B2JHD9</accession>
<sequence length="103" mass="11404">MYAVIKTGGKQYKVAVGEKLKVEQIPADIDAEITLDQVLAVGEGESIKFGTPLVSGASVKATVVSQGRHKKVTIFKMRRRKHYQKHGGHRQNYTELRIDAINA</sequence>
<proteinExistence type="inferred from homology"/>
<organism>
    <name type="scientific">Paraburkholderia phymatum (strain DSM 17167 / CIP 108236 / LMG 21445 / STM815)</name>
    <name type="common">Burkholderia phymatum</name>
    <dbReference type="NCBI Taxonomy" id="391038"/>
    <lineage>
        <taxon>Bacteria</taxon>
        <taxon>Pseudomonadati</taxon>
        <taxon>Pseudomonadota</taxon>
        <taxon>Betaproteobacteria</taxon>
        <taxon>Burkholderiales</taxon>
        <taxon>Burkholderiaceae</taxon>
        <taxon>Paraburkholderia</taxon>
    </lineage>
</organism>
<comment type="function">
    <text evidence="1">This protein binds to 23S rRNA in the presence of protein L20.</text>
</comment>
<comment type="subunit">
    <text evidence="1">Part of the 50S ribosomal subunit. Contacts protein L20.</text>
</comment>
<comment type="similarity">
    <text evidence="1">Belongs to the bacterial ribosomal protein bL21 family.</text>
</comment>
<name>RL21_PARP8</name>
<feature type="chain" id="PRO_1000143767" description="Large ribosomal subunit protein bL21">
    <location>
        <begin position="1"/>
        <end position="103"/>
    </location>
</feature>
<evidence type="ECO:0000255" key="1">
    <source>
        <dbReference type="HAMAP-Rule" id="MF_01363"/>
    </source>
</evidence>
<evidence type="ECO:0000305" key="2"/>
<reference key="1">
    <citation type="journal article" date="2014" name="Stand. Genomic Sci.">
        <title>Complete genome sequence of Burkholderia phymatum STM815(T), a broad host range and efficient nitrogen-fixing symbiont of Mimosa species.</title>
        <authorList>
            <person name="Moulin L."/>
            <person name="Klonowska A."/>
            <person name="Caroline B."/>
            <person name="Booth K."/>
            <person name="Vriezen J.A."/>
            <person name="Melkonian R."/>
            <person name="James E.K."/>
            <person name="Young J.P."/>
            <person name="Bena G."/>
            <person name="Hauser L."/>
            <person name="Land M."/>
            <person name="Kyrpides N."/>
            <person name="Bruce D."/>
            <person name="Chain P."/>
            <person name="Copeland A."/>
            <person name="Pitluck S."/>
            <person name="Woyke T."/>
            <person name="Lizotte-Waniewski M."/>
            <person name="Bristow J."/>
            <person name="Riley M."/>
        </authorList>
    </citation>
    <scope>NUCLEOTIDE SEQUENCE [LARGE SCALE GENOMIC DNA]</scope>
    <source>
        <strain>DSM 17167 / CIP 108236 / LMG 21445 / STM815</strain>
    </source>
</reference>
<protein>
    <recommendedName>
        <fullName evidence="1">Large ribosomal subunit protein bL21</fullName>
    </recommendedName>
    <alternativeName>
        <fullName evidence="2">50S ribosomal protein L21</fullName>
    </alternativeName>
</protein>